<evidence type="ECO:0000250" key="1"/>
<evidence type="ECO:0000250" key="2">
    <source>
        <dbReference type="UniProtKB" id="P05231"/>
    </source>
</evidence>
<evidence type="ECO:0000255" key="3"/>
<evidence type="ECO:0000256" key="4">
    <source>
        <dbReference type="SAM" id="MobiDB-lite"/>
    </source>
</evidence>
<evidence type="ECO:0000305" key="5"/>
<sequence>MNFTEGCEATGRRPGSAGSRRRRAPRPGPVALLPLLLPLLLPPAAAVPLPAAADSSGEVGLEEEAGARRALLDCEPLARVLRDRAVQLQDEMCKKFTVCENSMEMLVRNNLNLPKVTEEDGCLLAGFDEEKCLTKLSSGLFAFQTYLEFIQETFDSEKQNVESLCYSTKHLAATIRQMVINPDEVVIPDSAAQKSLLANLKSDKDWIEKITMHLILRDFTSFMEKTVRAVRYLKKTRSFSA</sequence>
<accession>Q90YI0</accession>
<feature type="signal peptide" evidence="3">
    <location>
        <begin position="1"/>
        <end position="46"/>
    </location>
</feature>
<feature type="chain" id="PRO_5000067200" description="Interleukin-6">
    <location>
        <begin position="47"/>
        <end position="241"/>
    </location>
</feature>
<feature type="region of interest" description="Disordered" evidence="4">
    <location>
        <begin position="1"/>
        <end position="25"/>
    </location>
</feature>
<feature type="disulfide bond" evidence="1">
    <location>
        <begin position="122"/>
        <end position="132"/>
    </location>
</feature>
<comment type="function">
    <text evidence="2">Cytokine with a wide variety of biological functions in immunity, tissue regeneration, and metabolism. Binds to IL6R, then the complex associates to the signaling subunit IL6ST/gp130 to trigger the intracellular IL6-signaling pathway. The interaction with the membrane-bound IL6R and IL6ST stimulates 'classic signaling', whereas the binding of IL6 and soluble IL6R to IL6ST stimulates 'trans-signaling'. Alternatively, 'cluster signaling' occurs when membrane-bound IL6:IL6R complexes on transmitter cells activate IL6ST receptors on neighboring receiver cells.</text>
</comment>
<comment type="subunit">
    <text evidence="2">Component of a hexamer of two molecules each of IL6, IL6R and IL6ST; first binds to IL6R to associate with the signaling subunit IL6ST.</text>
</comment>
<comment type="subcellular location">
    <subcellularLocation>
        <location evidence="2">Secreted</location>
    </subcellularLocation>
</comment>
<comment type="similarity">
    <text evidence="5">Belongs to the IL-6 superfamily.</text>
</comment>
<keyword id="KW-0011">Acute phase</keyword>
<keyword id="KW-0202">Cytokine</keyword>
<keyword id="KW-1015">Disulfide bond</keyword>
<keyword id="KW-0339">Growth factor</keyword>
<keyword id="KW-1185">Reference proteome</keyword>
<keyword id="KW-0964">Secreted</keyword>
<keyword id="KW-0732">Signal</keyword>
<gene>
    <name type="primary">IL6</name>
</gene>
<protein>
    <recommendedName>
        <fullName>Interleukin-6</fullName>
        <shortName>ChIL-6</shortName>
        <shortName>IL-6</shortName>
    </recommendedName>
</protein>
<name>IL6_CHICK</name>
<organism>
    <name type="scientific">Gallus gallus</name>
    <name type="common">Chicken</name>
    <dbReference type="NCBI Taxonomy" id="9031"/>
    <lineage>
        <taxon>Eukaryota</taxon>
        <taxon>Metazoa</taxon>
        <taxon>Chordata</taxon>
        <taxon>Craniata</taxon>
        <taxon>Vertebrata</taxon>
        <taxon>Euteleostomi</taxon>
        <taxon>Archelosauria</taxon>
        <taxon>Archosauria</taxon>
        <taxon>Dinosauria</taxon>
        <taxon>Saurischia</taxon>
        <taxon>Theropoda</taxon>
        <taxon>Coelurosauria</taxon>
        <taxon>Aves</taxon>
        <taxon>Neognathae</taxon>
        <taxon>Galloanserae</taxon>
        <taxon>Galliformes</taxon>
        <taxon>Phasianidae</taxon>
        <taxon>Phasianinae</taxon>
        <taxon>Gallus</taxon>
    </lineage>
</organism>
<dbReference type="EMBL" id="AJ250838">
    <property type="protein sequence ID" value="CAC15566.2"/>
    <property type="molecule type" value="Genomic_DNA"/>
</dbReference>
<dbReference type="EMBL" id="AJ309540">
    <property type="protein sequence ID" value="CAC40812.1"/>
    <property type="molecule type" value="mRNA"/>
</dbReference>
<dbReference type="RefSeq" id="NP_989959.1">
    <property type="nucleotide sequence ID" value="NM_204628.2"/>
</dbReference>
<dbReference type="SMR" id="Q90YI0"/>
<dbReference type="FunCoup" id="Q90YI0">
    <property type="interactions" value="150"/>
</dbReference>
<dbReference type="STRING" id="9031.ENSGALP00000068117"/>
<dbReference type="PaxDb" id="9031-ENSGALP00000017738"/>
<dbReference type="Ensembl" id="ENSGALT00010004434.1">
    <property type="protein sequence ID" value="ENSGALP00010002695.1"/>
    <property type="gene ID" value="ENSGALG00010001941.1"/>
</dbReference>
<dbReference type="GeneID" id="395337"/>
<dbReference type="KEGG" id="gga:395337"/>
<dbReference type="CTD" id="3569"/>
<dbReference type="VEuPathDB" id="HostDB:geneid_395337"/>
<dbReference type="eggNOG" id="ENOG502S7Q4">
    <property type="taxonomic scope" value="Eukaryota"/>
</dbReference>
<dbReference type="GeneTree" id="ENSGT00390000000878"/>
<dbReference type="HOGENOM" id="CLU_096521_1_0_1"/>
<dbReference type="InParanoid" id="Q90YI0"/>
<dbReference type="OMA" id="QEEMCEK"/>
<dbReference type="OrthoDB" id="8943569at2759"/>
<dbReference type="PhylomeDB" id="Q90YI0"/>
<dbReference type="Reactome" id="R-GGA-1059683">
    <property type="pathway name" value="Interleukin-6 signaling"/>
</dbReference>
<dbReference type="Reactome" id="R-GGA-381426">
    <property type="pathway name" value="Regulation of Insulin-like Growth Factor (IGF) transport and uptake by Insulin-like Growth Factor Binding Proteins (IGFBPs)"/>
</dbReference>
<dbReference type="Reactome" id="R-GGA-8957275">
    <property type="pathway name" value="Post-translational protein phosphorylation"/>
</dbReference>
<dbReference type="PRO" id="PR:Q90YI0"/>
<dbReference type="Proteomes" id="UP000000539">
    <property type="component" value="Chromosome 2"/>
</dbReference>
<dbReference type="Bgee" id="ENSGALG00000010915">
    <property type="expression patterns" value="Expressed in granulocyte and 3 other cell types or tissues"/>
</dbReference>
<dbReference type="GO" id="GO:0005615">
    <property type="term" value="C:extracellular space"/>
    <property type="evidence" value="ECO:0000318"/>
    <property type="project" value="GO_Central"/>
</dbReference>
<dbReference type="GO" id="GO:0005896">
    <property type="term" value="C:interleukin-6 receptor complex"/>
    <property type="evidence" value="ECO:0000318"/>
    <property type="project" value="GO_Central"/>
</dbReference>
<dbReference type="GO" id="GO:0005125">
    <property type="term" value="F:cytokine activity"/>
    <property type="evidence" value="ECO:0000318"/>
    <property type="project" value="GO_Central"/>
</dbReference>
<dbReference type="GO" id="GO:0008083">
    <property type="term" value="F:growth factor activity"/>
    <property type="evidence" value="ECO:0000318"/>
    <property type="project" value="GO_Central"/>
</dbReference>
<dbReference type="GO" id="GO:0005138">
    <property type="term" value="F:interleukin-6 receptor binding"/>
    <property type="evidence" value="ECO:0007669"/>
    <property type="project" value="InterPro"/>
</dbReference>
<dbReference type="GO" id="GO:0006953">
    <property type="term" value="P:acute-phase response"/>
    <property type="evidence" value="ECO:0007669"/>
    <property type="project" value="UniProtKB-KW"/>
</dbReference>
<dbReference type="GO" id="GO:0030154">
    <property type="term" value="P:cell differentiation"/>
    <property type="evidence" value="ECO:0007669"/>
    <property type="project" value="InterPro"/>
</dbReference>
<dbReference type="GO" id="GO:0070417">
    <property type="term" value="P:cellular response to cold"/>
    <property type="evidence" value="ECO:0000270"/>
    <property type="project" value="AgBase"/>
</dbReference>
<dbReference type="GO" id="GO:0042593">
    <property type="term" value="P:glucose homeostasis"/>
    <property type="evidence" value="ECO:0000250"/>
    <property type="project" value="UniProtKB"/>
</dbReference>
<dbReference type="GO" id="GO:0072574">
    <property type="term" value="P:hepatocyte proliferation"/>
    <property type="evidence" value="ECO:0000250"/>
    <property type="project" value="UniProtKB"/>
</dbReference>
<dbReference type="GO" id="GO:0006955">
    <property type="term" value="P:immune response"/>
    <property type="evidence" value="ECO:0007669"/>
    <property type="project" value="InterPro"/>
</dbReference>
<dbReference type="GO" id="GO:0070102">
    <property type="term" value="P:interleukin-6-mediated signaling pathway"/>
    <property type="evidence" value="ECO:0000250"/>
    <property type="project" value="UniProtKB"/>
</dbReference>
<dbReference type="GO" id="GO:0097421">
    <property type="term" value="P:liver regeneration"/>
    <property type="evidence" value="ECO:0000250"/>
    <property type="project" value="UniProtKB"/>
</dbReference>
<dbReference type="GO" id="GO:0008284">
    <property type="term" value="P:positive regulation of cell population proliferation"/>
    <property type="evidence" value="ECO:0000318"/>
    <property type="project" value="GO_Central"/>
</dbReference>
<dbReference type="GO" id="GO:0046427">
    <property type="term" value="P:positive regulation of receptor signaling pathway via JAK-STAT"/>
    <property type="evidence" value="ECO:0000318"/>
    <property type="project" value="GO_Central"/>
</dbReference>
<dbReference type="GO" id="GO:1904894">
    <property type="term" value="P:positive regulation of receptor signaling pathway via STAT"/>
    <property type="evidence" value="ECO:0000250"/>
    <property type="project" value="UniProtKB"/>
</dbReference>
<dbReference type="GO" id="GO:0070092">
    <property type="term" value="P:regulation of glucagon secretion"/>
    <property type="evidence" value="ECO:0000250"/>
    <property type="project" value="UniProtKB"/>
</dbReference>
<dbReference type="GO" id="GO:0050796">
    <property type="term" value="P:regulation of insulin secretion"/>
    <property type="evidence" value="ECO:0000250"/>
    <property type="project" value="UniProtKB"/>
</dbReference>
<dbReference type="GO" id="GO:0014823">
    <property type="term" value="P:response to activity"/>
    <property type="evidence" value="ECO:0000250"/>
    <property type="project" value="UniProtKB"/>
</dbReference>
<dbReference type="GO" id="GO:0010573">
    <property type="term" value="P:vascular endothelial growth factor production"/>
    <property type="evidence" value="ECO:0000250"/>
    <property type="project" value="UniProtKB"/>
</dbReference>
<dbReference type="Gene3D" id="1.20.1250.10">
    <property type="match status" value="1"/>
</dbReference>
<dbReference type="InterPro" id="IPR009079">
    <property type="entry name" value="4_helix_cytokine-like_core"/>
</dbReference>
<dbReference type="InterPro" id="IPR003574">
    <property type="entry name" value="IL-6-like"/>
</dbReference>
<dbReference type="InterPro" id="IPR030474">
    <property type="entry name" value="IL-6/GCSF/MGF"/>
</dbReference>
<dbReference type="InterPro" id="IPR030473">
    <property type="entry name" value="IL6/GCSF/MGF_CS"/>
</dbReference>
<dbReference type="PANTHER" id="PTHR48494">
    <property type="entry name" value="INTERLEUKIN-6"/>
    <property type="match status" value="1"/>
</dbReference>
<dbReference type="PANTHER" id="PTHR48494:SF1">
    <property type="entry name" value="INTERLEUKIN-6"/>
    <property type="match status" value="1"/>
</dbReference>
<dbReference type="Pfam" id="PF00489">
    <property type="entry name" value="IL6"/>
    <property type="match status" value="1"/>
</dbReference>
<dbReference type="PRINTS" id="PR00433">
    <property type="entry name" value="IL6GCSFMGF"/>
</dbReference>
<dbReference type="PRINTS" id="PR00434">
    <property type="entry name" value="INTERLEUKIN6"/>
</dbReference>
<dbReference type="SMART" id="SM00126">
    <property type="entry name" value="IL6"/>
    <property type="match status" value="1"/>
</dbReference>
<dbReference type="SUPFAM" id="SSF47266">
    <property type="entry name" value="4-helical cytokines"/>
    <property type="match status" value="1"/>
</dbReference>
<dbReference type="PROSITE" id="PS00254">
    <property type="entry name" value="INTERLEUKIN_6"/>
    <property type="match status" value="1"/>
</dbReference>
<proteinExistence type="evidence at transcript level"/>
<reference key="1">
    <citation type="journal article" date="2000" name="Microbiology">
        <title>Differential cytokine expression in avian cells in response to invasion by Salmonella typhimurium, Salmonella enteritidis and Salmonella gallinarum.</title>
        <authorList>
            <person name="Kaiser P."/>
            <person name="Rothwell L."/>
            <person name="Galyov E.E."/>
            <person name="Barrow P.A."/>
            <person name="Burnside J."/>
            <person name="Wigley P."/>
        </authorList>
    </citation>
    <scope>NUCLEOTIDE SEQUENCE [GENOMIC DNA]</scope>
</reference>
<reference key="2">
    <citation type="journal article" date="2001" name="Eur. J. Biochem.">
        <title>Chicken interleukin-6. cDNA structure and biological properties.</title>
        <authorList>
            <person name="Schneider K."/>
            <person name="Klaas R."/>
            <person name="Kaspers B."/>
            <person name="Staeheli P."/>
        </authorList>
    </citation>
    <scope>NUCLEOTIDE SEQUENCE [MRNA]</scope>
</reference>